<reference key="1">
    <citation type="book" date="2006" name="Gram positive pathogens, 2nd edition">
        <title>The Staphylococcus aureus NCTC 8325 genome.</title>
        <editorList>
            <person name="Fischetti V."/>
            <person name="Novick R."/>
            <person name="Ferretti J."/>
            <person name="Portnoy D."/>
            <person name="Rood J."/>
        </editorList>
        <authorList>
            <person name="Gillaspy A.F."/>
            <person name="Worrell V."/>
            <person name="Orvis J."/>
            <person name="Roe B.A."/>
            <person name="Dyer D.W."/>
            <person name="Iandolo J.J."/>
        </authorList>
    </citation>
    <scope>NUCLEOTIDE SEQUENCE [LARGE SCALE GENOMIC DNA]</scope>
    <source>
        <strain>NCTC 8325 / PS 47</strain>
    </source>
</reference>
<reference key="2">
    <citation type="journal article" date="2005" name="Mol. Microbiol.">
        <title>Why are pathogenic staphylococci so lysozyme resistant? The peptidoglycan O-acetyltransferase OatA is the major determinant for lysozyme resistance of Staphylococcus aureus.</title>
        <authorList>
            <person name="Bera A."/>
            <person name="Herbert S."/>
            <person name="Jakob A."/>
            <person name="Vollmer W."/>
            <person name="Goetz F."/>
        </authorList>
    </citation>
    <scope>FUNCTION</scope>
</reference>
<reference evidence="6 7" key="3">
    <citation type="journal article" date="2020" name="J. Biol. Chem.">
        <title>Structural basis for the O-acetyltransferase function of the extracytoplasmic domain of OatA from Staphylococcus aureus.</title>
        <authorList>
            <person name="Jones C.S."/>
            <person name="Sychantha D."/>
            <person name="Howell P.L."/>
            <person name="Clarke A.J."/>
        </authorList>
    </citation>
    <scope>X-RAY CRYSTALLOGRAPHY (1.55 ANGSTROMS) OF 445-601 OF MUTANTS 1-MET--LYS-444/ALA-495/ALA-496 AND 1-MET--LYS-444/ALA-551/ALA-552 IN COMPLEX WITH ZINC</scope>
    <scope>FUNCTION</scope>
    <scope>CATALYTIC ACTIVITY</scope>
    <scope>SUBUNIT</scope>
    <scope>ACTIVE SITE</scope>
    <scope>MUTAGENESIS OF 1-MET--LYS-444; SER-453; ASP-457; LYS-464; LYS-465; VAL-475; LYS-495; LYS-496; ASN-507; GLU-551; LYS-552; ASP-575 AND HIS-578</scope>
    <scope>REACTION MECHANISM</scope>
</reference>
<accession>Q2FV54</accession>
<gene>
    <name evidence="4" type="primary">oatA</name>
    <name type="ordered locus">SAOUHSC_02885</name>
</gene>
<dbReference type="EC" id="2.3.1.-" evidence="3"/>
<dbReference type="EMBL" id="CP000253">
    <property type="protein sequence ID" value="ABD31881.1"/>
    <property type="molecule type" value="Genomic_DNA"/>
</dbReference>
<dbReference type="RefSeq" id="WP_000379821.1">
    <property type="nucleotide sequence ID" value="NZ_LS483365.1"/>
</dbReference>
<dbReference type="RefSeq" id="YP_501338.1">
    <property type="nucleotide sequence ID" value="NC_007795.1"/>
</dbReference>
<dbReference type="PDB" id="6VJP">
    <property type="method" value="X-ray"/>
    <property type="resolution" value="1.71 A"/>
    <property type="chains" value="A/B=445-601"/>
</dbReference>
<dbReference type="PDB" id="6WN9">
    <property type="method" value="X-ray"/>
    <property type="resolution" value="1.55 A"/>
    <property type="chains" value="A/B=445-601"/>
</dbReference>
<dbReference type="PDBsum" id="6VJP"/>
<dbReference type="PDBsum" id="6WN9"/>
<dbReference type="SMR" id="Q2FV54"/>
<dbReference type="STRING" id="93061.SAOUHSC_02885"/>
<dbReference type="PaxDb" id="1280-SAXN108_2818"/>
<dbReference type="GeneID" id="3921554"/>
<dbReference type="KEGG" id="sao:SAOUHSC_02885"/>
<dbReference type="PATRIC" id="fig|93061.5.peg.2607"/>
<dbReference type="eggNOG" id="COG1835">
    <property type="taxonomic scope" value="Bacteria"/>
</dbReference>
<dbReference type="eggNOG" id="COG2755">
    <property type="taxonomic scope" value="Bacteria"/>
</dbReference>
<dbReference type="HOGENOM" id="CLU_005679_11_2_9"/>
<dbReference type="OrthoDB" id="9796461at2"/>
<dbReference type="PRO" id="PR:Q2FV54"/>
<dbReference type="Proteomes" id="UP000008816">
    <property type="component" value="Chromosome"/>
</dbReference>
<dbReference type="GO" id="GO:0016020">
    <property type="term" value="C:membrane"/>
    <property type="evidence" value="ECO:0000318"/>
    <property type="project" value="GO_Central"/>
</dbReference>
<dbReference type="GO" id="GO:0005886">
    <property type="term" value="C:plasma membrane"/>
    <property type="evidence" value="ECO:0007669"/>
    <property type="project" value="UniProtKB-SubCell"/>
</dbReference>
<dbReference type="GO" id="GO:0016747">
    <property type="term" value="F:acyltransferase activity, transferring groups other than amino-acyl groups"/>
    <property type="evidence" value="ECO:0007669"/>
    <property type="project" value="InterPro"/>
</dbReference>
<dbReference type="GO" id="GO:0009103">
    <property type="term" value="P:lipopolysaccharide biosynthetic process"/>
    <property type="evidence" value="ECO:0000318"/>
    <property type="project" value="GO_Central"/>
</dbReference>
<dbReference type="CDD" id="cd01840">
    <property type="entry name" value="SGNH_hydrolase_yrhL_like"/>
    <property type="match status" value="1"/>
</dbReference>
<dbReference type="FunFam" id="3.40.50.1110:FF:000006">
    <property type="entry name" value="O-acetyltransferase OatA"/>
    <property type="match status" value="1"/>
</dbReference>
<dbReference type="Gene3D" id="3.40.50.1110">
    <property type="entry name" value="SGNH hydrolase"/>
    <property type="match status" value="1"/>
</dbReference>
<dbReference type="InterPro" id="IPR002656">
    <property type="entry name" value="Acyl_transf_3_dom"/>
</dbReference>
<dbReference type="InterPro" id="IPR050879">
    <property type="entry name" value="Acyltransferase_3"/>
</dbReference>
<dbReference type="InterPro" id="IPR036514">
    <property type="entry name" value="SGNH_hydro_sf"/>
</dbReference>
<dbReference type="PANTHER" id="PTHR23028">
    <property type="entry name" value="ACETYLTRANSFERASE"/>
    <property type="match status" value="1"/>
</dbReference>
<dbReference type="PANTHER" id="PTHR23028:SF53">
    <property type="entry name" value="ACYL_TRANSF_3 DOMAIN-CONTAINING PROTEIN"/>
    <property type="match status" value="1"/>
</dbReference>
<dbReference type="Pfam" id="PF01757">
    <property type="entry name" value="Acyl_transf_3"/>
    <property type="match status" value="1"/>
</dbReference>
<dbReference type="SUPFAM" id="SSF52266">
    <property type="entry name" value="SGNH hydrolase"/>
    <property type="match status" value="1"/>
</dbReference>
<feature type="chain" id="PRO_0000289545" description="O-acetyltransferase OatA">
    <location>
        <begin position="1"/>
        <end position="603"/>
    </location>
</feature>
<feature type="transmembrane region" description="Helical" evidence="1">
    <location>
        <begin position="17"/>
        <end position="37"/>
    </location>
</feature>
<feature type="transmembrane region" description="Helical" evidence="1">
    <location>
        <begin position="45"/>
        <end position="65"/>
    </location>
</feature>
<feature type="transmembrane region" description="Helical" evidence="1">
    <location>
        <begin position="87"/>
        <end position="107"/>
    </location>
</feature>
<feature type="transmembrane region" description="Helical" evidence="1">
    <location>
        <begin position="148"/>
        <end position="168"/>
    </location>
</feature>
<feature type="transmembrane region" description="Helical" evidence="1">
    <location>
        <begin position="177"/>
        <end position="197"/>
    </location>
</feature>
<feature type="transmembrane region" description="Helical" evidence="1">
    <location>
        <begin position="211"/>
        <end position="231"/>
    </location>
</feature>
<feature type="transmembrane region" description="Helical" evidence="1">
    <location>
        <begin position="239"/>
        <end position="259"/>
    </location>
</feature>
<feature type="transmembrane region" description="Helical" evidence="1">
    <location>
        <begin position="268"/>
        <end position="288"/>
    </location>
</feature>
<feature type="transmembrane region" description="Helical" evidence="1">
    <location>
        <begin position="311"/>
        <end position="331"/>
    </location>
</feature>
<feature type="transmembrane region" description="Helical" evidence="1">
    <location>
        <begin position="333"/>
        <end position="353"/>
    </location>
</feature>
<feature type="transmembrane region" description="Helical" evidence="1">
    <location>
        <begin position="382"/>
        <end position="402"/>
    </location>
</feature>
<feature type="active site" evidence="3">
    <location>
        <position position="453"/>
    </location>
</feature>
<feature type="active site" evidence="3">
    <location>
        <position position="575"/>
    </location>
</feature>
<feature type="active site" evidence="3">
    <location>
        <position position="578"/>
    </location>
</feature>
<feature type="mutagenesis site" description="Has esterase and transferase activity using 4-methylumbelliferyl acetate (4MU-Ac) and pentaacetyl-chitopentaose as substrates, respectively." evidence="3">
    <location>
        <begin position="1"/>
        <end position="444"/>
    </location>
</feature>
<feature type="mutagenesis site" description="Loss of esterase activity using 4-methylumbelliferyl acetate (4MU-Ac) as substrate; when associated with 1-M--K-444." evidence="3">
    <original>S</original>
    <variation>A</variation>
    <location>
        <position position="453"/>
    </location>
</feature>
<feature type="mutagenesis site" description="292% increased relative esterase activity using 4-methylumbelliferyl acetate (4MU-Ac) as substrate and 766% increased relative transferase activity with pentaacetyl-chitopentaose as substrate; when associated with 1-M--K-444." evidence="3">
    <original>D</original>
    <variation>A</variation>
    <location>
        <position position="457"/>
    </location>
</feature>
<feature type="mutagenesis site" description="285% increased relative esterase activity using 4-methylumbelliferyl acetate (4MU-Ac) as substrate and 562% increased relative transferase activity with pentaacetyl-chitopentaose as substrate; when associated with 1-M--K-444." evidence="3">
    <original>D</original>
    <variation>N</variation>
    <location>
        <position position="457"/>
    </location>
</feature>
<feature type="mutagenesis site" description="6% increased relative esterase activity using 4-methylumbelliferyl acetate (4MU-Ac) as substrate; when associated with 1-M--K-444." evidence="3">
    <original>KK</original>
    <variation>AA</variation>
    <location>
        <begin position="464"/>
        <end position="465"/>
    </location>
</feature>
<feature type="mutagenesis site" description="Loss of esterase activity using 4-methylumbelliferyl acetate (4MU-Ac) as substrate; when associated with 1-M--K-444." evidence="3">
    <original>V</original>
    <variation>G</variation>
    <location>
        <position position="475"/>
    </location>
</feature>
<feature type="mutagenesis site" description="14% increased relative esterase activity using 4-methylumbelliferyl acetate (4MU-Ac) as substrate; when associated with 1-M--K-444." evidence="3">
    <original>KK</original>
    <variation>AA</variation>
    <location>
        <begin position="495"/>
        <end position="496"/>
    </location>
</feature>
<feature type="mutagenesis site" description="Loss of esterase activity using 4-methylumbelliferyl acetate (4MU-Ac) as substrate; when associated with 1-M--K-444." evidence="3">
    <original>N</original>
    <variation>A</variation>
    <location>
        <position position="507"/>
    </location>
</feature>
<feature type="mutagenesis site" description="15% increased relative esterase activity using 4-methylumbelliferyl acetate (4MU-Ac) as substrate; when associated with 1-M--K-444." evidence="3">
    <original>EK</original>
    <variation>AA</variation>
    <location>
        <begin position="551"/>
        <end position="552"/>
    </location>
</feature>
<feature type="mutagenesis site" description="1.02% residual relative esterase activity using 4-methylumbelliferyl acetate (4MU-Ac) as substrate; when associated with 1-M--K-444." evidence="3">
    <original>D</original>
    <variation>A</variation>
    <location>
        <position position="575"/>
    </location>
</feature>
<feature type="mutagenesis site" description="2.08% residual relative esterase activity using 4-methylumbelliferyl acetate (4MU-Ac) as substrate; when associated with 1-M--K-444." evidence="3">
    <original>H</original>
    <variation>A</variation>
    <location>
        <position position="578"/>
    </location>
</feature>
<feature type="strand" evidence="8">
    <location>
        <begin position="448"/>
        <end position="452"/>
    </location>
</feature>
<feature type="helix" evidence="8">
    <location>
        <begin position="453"/>
        <end position="465"/>
    </location>
</feature>
<feature type="strand" evidence="8">
    <location>
        <begin position="470"/>
        <end position="473"/>
    </location>
</feature>
<feature type="helix" evidence="8">
    <location>
        <begin position="479"/>
        <end position="489"/>
    </location>
</feature>
<feature type="helix" evidence="8">
    <location>
        <begin position="491"/>
        <end position="493"/>
    </location>
</feature>
<feature type="strand" evidence="8">
    <location>
        <begin position="499"/>
        <end position="503"/>
    </location>
</feature>
<feature type="helix" evidence="8">
    <location>
        <begin position="512"/>
        <end position="521"/>
    </location>
</feature>
<feature type="turn" evidence="8">
    <location>
        <begin position="522"/>
        <end position="524"/>
    </location>
</feature>
<feature type="strand" evidence="8">
    <location>
        <begin position="525"/>
        <end position="530"/>
    </location>
</feature>
<feature type="helix" evidence="8">
    <location>
        <begin position="539"/>
        <end position="552"/>
    </location>
</feature>
<feature type="strand" evidence="8">
    <location>
        <begin position="556"/>
        <end position="559"/>
    </location>
</feature>
<feature type="helix" evidence="8">
    <location>
        <begin position="561"/>
        <end position="564"/>
    </location>
</feature>
<feature type="turn" evidence="8">
    <location>
        <begin position="565"/>
        <end position="567"/>
    </location>
</feature>
<feature type="helix" evidence="8">
    <location>
        <begin position="569"/>
        <end position="571"/>
    </location>
</feature>
<feature type="strand" evidence="8">
    <location>
        <begin position="576"/>
        <end position="579"/>
    </location>
</feature>
<feature type="helix" evidence="8">
    <location>
        <begin position="581"/>
        <end position="597"/>
    </location>
</feature>
<evidence type="ECO:0000255" key="1"/>
<evidence type="ECO:0000269" key="2">
    <source>
    </source>
</evidence>
<evidence type="ECO:0000269" key="3">
    <source>
    </source>
</evidence>
<evidence type="ECO:0000303" key="4">
    <source>
    </source>
</evidence>
<evidence type="ECO:0000305" key="5"/>
<evidence type="ECO:0007744" key="6">
    <source>
        <dbReference type="PDB" id="6VJP"/>
    </source>
</evidence>
<evidence type="ECO:0007744" key="7">
    <source>
        <dbReference type="PDB" id="6WN9"/>
    </source>
</evidence>
<evidence type="ECO:0007829" key="8">
    <source>
        <dbReference type="PDB" id="6WN9"/>
    </source>
</evidence>
<name>OATA_STAA8</name>
<proteinExistence type="evidence at protein level"/>
<protein>
    <recommendedName>
        <fullName evidence="4">O-acetyltransferase OatA</fullName>
        <ecNumber evidence="3">2.3.1.-</ecNumber>
    </recommendedName>
</protein>
<comment type="function">
    <text evidence="2 3">Responsible for O-acetylation at the C(6)-hydroxyl group of N-acetylmuramyl residues, forming the corresponding N,6-O-diacetylmuramic acid of the peptidoglycan (PubMed:15661003, PubMed:32350117). O-acetylation of the peptidoglycan is the major determinant for lysozyme resistance (PubMed:15661003).</text>
</comment>
<comment type="subunit">
    <text evidence="3">Monomer.</text>
</comment>
<comment type="subcellular location">
    <subcellularLocation>
        <location>Cell membrane</location>
        <topology>Multi-pass membrane protein</topology>
    </subcellularLocation>
</comment>
<comment type="similarity">
    <text evidence="5">Belongs to the acyltransferase 3 family.</text>
</comment>
<organism>
    <name type="scientific">Staphylococcus aureus (strain NCTC 8325 / PS 47)</name>
    <dbReference type="NCBI Taxonomy" id="93061"/>
    <lineage>
        <taxon>Bacteria</taxon>
        <taxon>Bacillati</taxon>
        <taxon>Bacillota</taxon>
        <taxon>Bacilli</taxon>
        <taxon>Bacillales</taxon>
        <taxon>Staphylococcaceae</taxon>
        <taxon>Staphylococcus</taxon>
    </lineage>
</organism>
<keyword id="KW-0002">3D-structure</keyword>
<keyword id="KW-0012">Acyltransferase</keyword>
<keyword id="KW-1003">Cell membrane</keyword>
<keyword id="KW-0472">Membrane</keyword>
<keyword id="KW-1185">Reference proteome</keyword>
<keyword id="KW-0808">Transferase</keyword>
<keyword id="KW-0812">Transmembrane</keyword>
<keyword id="KW-1133">Transmembrane helix</keyword>
<keyword id="KW-0843">Virulence</keyword>
<sequence length="603" mass="69099">MDTKDFKRLEKMYSPRYLPGLDGLRAFAVIGIIIYHLNAQWLSGGFLGVDTFFVISGYLITSLLISEYYRTQKIDLLEFWKRRLKRLIPAVLFLICVVLTFTLIFKPELIIQMKRDAIAAIFYVSNWWYISQNVDYFNQFAIEPLKHLWSLAIEEQFYLLFPLVITFLLHRFKPRNIIQTLFIVSLISLGLMIVIHFITGDNSRVYFGTDTRLQTLLLGCILAFIWPPFALKKDISKKIVVSLDIIGISGFAVLMTLFFIVGDQDQWIYNGGFYIISFATLFIIAIAVHPSSLFAKFLSMKPLLIIGKRSYSLYLWHYPIIVFVNSYYVQGQIPVYVYIIEILLTALMAEISYRFIETPIRKKGFKAFAFLPKKKGQFARTVLVILLLVPSIVVLSGQFDALGKQHEAEKKEKKTEFKTTKKKVVKKDKQEDKQTANSKEDIKKSSPLLIGDSVMVDIGNVFTKKIPNAQIDGKVGRQLVDATPIVKSQYKDYAKKGQKVVVELGTNGAFTKDQLNELLDSFGKADIYLVSIRVPRDYEGRINKLIYEAAEKRSNVHLVDWYKASAGHPEYFAYDGIHLEYAGSKALTDLIVKTMETHATNKK</sequence>